<sequence length="125" mass="14198">MRPRCCILALVCWITVFLLQCSKGTTDAPVGSGLWLCQPTPRCGNKIYNPSEQCCYDDAILSLKETRRCGSTCTFWPCFELCCPESFGPQQKFLVKLRVLGMKSQCHLSPISRSCTRNRRHVLYP</sequence>
<comment type="function">
    <text evidence="3">Potential ligand of the IGFLR1 cell membrane receptor.</text>
</comment>
<comment type="subcellular location">
    <subcellularLocation>
        <location evidence="4">Secreted</location>
    </subcellularLocation>
</comment>
<comment type="tissue specificity">
    <text evidence="2">Detected in the cerebellum.</text>
</comment>
<comment type="similarity">
    <text evidence="4">Belongs to the IGFL family.</text>
</comment>
<proteinExistence type="evidence at protein level"/>
<dbReference type="EMBL" id="AY672113">
    <property type="protein sequence ID" value="AAT77787.1"/>
    <property type="molecule type" value="mRNA"/>
</dbReference>
<dbReference type="EMBL" id="AY358434">
    <property type="protein sequence ID" value="AAQ88800.1"/>
    <property type="molecule type" value="mRNA"/>
</dbReference>
<dbReference type="EMBL" id="AC007785">
    <property type="status" value="NOT_ANNOTATED_CDS"/>
    <property type="molecule type" value="Genomic_DNA"/>
</dbReference>
<dbReference type="CCDS" id="CCDS33058.1"/>
<dbReference type="RefSeq" id="NP_997276.1">
    <property type="nucleotide sequence ID" value="NM_207393.2"/>
</dbReference>
<dbReference type="BioGRID" id="132739">
    <property type="interactions" value="74"/>
</dbReference>
<dbReference type="FunCoup" id="Q6UXB1">
    <property type="interactions" value="35"/>
</dbReference>
<dbReference type="IntAct" id="Q6UXB1">
    <property type="interactions" value="75"/>
</dbReference>
<dbReference type="STRING" id="9606.ENSP00000344860"/>
<dbReference type="BioMuta" id="IGFL3"/>
<dbReference type="DMDM" id="74738197"/>
<dbReference type="MassIVE" id="Q6UXB1"/>
<dbReference type="PaxDb" id="9606-ENSP00000344860"/>
<dbReference type="PeptideAtlas" id="Q6UXB1"/>
<dbReference type="ProteomicsDB" id="67582"/>
<dbReference type="Antibodypedia" id="67448">
    <property type="antibodies" value="42 antibodies from 16 providers"/>
</dbReference>
<dbReference type="DNASU" id="388555"/>
<dbReference type="Ensembl" id="ENST00000341415.3">
    <property type="protein sequence ID" value="ENSP00000344860.2"/>
    <property type="gene ID" value="ENSG00000188624.3"/>
</dbReference>
<dbReference type="GeneID" id="388555"/>
<dbReference type="KEGG" id="hsa:388555"/>
<dbReference type="MANE-Select" id="ENST00000341415.3">
    <property type="protein sequence ID" value="ENSP00000344860.2"/>
    <property type="RefSeq nucleotide sequence ID" value="NM_207393.2"/>
    <property type="RefSeq protein sequence ID" value="NP_997276.1"/>
</dbReference>
<dbReference type="UCSC" id="uc002pea.1">
    <property type="organism name" value="human"/>
</dbReference>
<dbReference type="AGR" id="HGNC:32930"/>
<dbReference type="CTD" id="388555"/>
<dbReference type="GeneCards" id="IGFL3"/>
<dbReference type="HGNC" id="HGNC:32930">
    <property type="gene designation" value="IGFL3"/>
</dbReference>
<dbReference type="HPA" id="ENSG00000188624">
    <property type="expression patterns" value="Tissue enriched (skin)"/>
</dbReference>
<dbReference type="MIM" id="610546">
    <property type="type" value="gene"/>
</dbReference>
<dbReference type="neXtProt" id="NX_Q6UXB1"/>
<dbReference type="OpenTargets" id="ENSG00000188624"/>
<dbReference type="PharmGKB" id="PA147357949"/>
<dbReference type="VEuPathDB" id="HostDB:ENSG00000188624"/>
<dbReference type="eggNOG" id="ENOG502TJ2N">
    <property type="taxonomic scope" value="Eukaryota"/>
</dbReference>
<dbReference type="GeneTree" id="ENSGT00390000009557"/>
<dbReference type="HOGENOM" id="CLU_148773_1_0_1"/>
<dbReference type="InParanoid" id="Q6UXB1"/>
<dbReference type="OMA" id="VWGITVF"/>
<dbReference type="OrthoDB" id="9834561at2759"/>
<dbReference type="PAN-GO" id="Q6UXB1">
    <property type="GO annotations" value="2 GO annotations based on evolutionary models"/>
</dbReference>
<dbReference type="PhylomeDB" id="Q6UXB1"/>
<dbReference type="TreeFam" id="TF343427"/>
<dbReference type="PathwayCommons" id="Q6UXB1"/>
<dbReference type="SignaLink" id="Q6UXB1"/>
<dbReference type="BioGRID-ORCS" id="388555">
    <property type="hits" value="11 hits in 1132 CRISPR screens"/>
</dbReference>
<dbReference type="GenomeRNAi" id="388555"/>
<dbReference type="Pharos" id="Q6UXB1">
    <property type="development level" value="Tdark"/>
</dbReference>
<dbReference type="PRO" id="PR:Q6UXB1"/>
<dbReference type="Proteomes" id="UP000005640">
    <property type="component" value="Chromosome 19"/>
</dbReference>
<dbReference type="RNAct" id="Q6UXB1">
    <property type="molecule type" value="protein"/>
</dbReference>
<dbReference type="Bgee" id="ENSG00000188624">
    <property type="expression patterns" value="Expressed in skin of leg and 57 other cell types or tissues"/>
</dbReference>
<dbReference type="GO" id="GO:0005615">
    <property type="term" value="C:extracellular space"/>
    <property type="evidence" value="ECO:0000314"/>
    <property type="project" value="UniProtKB"/>
</dbReference>
<dbReference type="GO" id="GO:0005102">
    <property type="term" value="F:signaling receptor binding"/>
    <property type="evidence" value="ECO:0000353"/>
    <property type="project" value="UniProtKB"/>
</dbReference>
<dbReference type="InterPro" id="IPR032744">
    <property type="entry name" value="IGFL"/>
</dbReference>
<dbReference type="PANTHER" id="PTHR34827:SF5">
    <property type="entry name" value="INSULIN GROWTH FACTOR-LIKE FAMILY MEMBER 3"/>
    <property type="match status" value="1"/>
</dbReference>
<dbReference type="PANTHER" id="PTHR34827">
    <property type="entry name" value="INSULIN GROWTH FACTOR-LIKE FAMILY MEMBER 3-RELATED"/>
    <property type="match status" value="1"/>
</dbReference>
<dbReference type="Pfam" id="PF14653">
    <property type="entry name" value="IGFL"/>
    <property type="match status" value="1"/>
</dbReference>
<keyword id="KW-0903">Direct protein sequencing</keyword>
<keyword id="KW-1267">Proteomics identification</keyword>
<keyword id="KW-1185">Reference proteome</keyword>
<keyword id="KW-0964">Secreted</keyword>
<keyword id="KW-0732">Signal</keyword>
<gene>
    <name type="primary">IGFL3</name>
    <name type="ORF">UNQ483/PRO982</name>
</gene>
<feature type="signal peptide" evidence="1">
    <location>
        <begin position="1"/>
        <end position="24"/>
    </location>
</feature>
<feature type="chain" id="PRO_0000044634" description="Insulin growth factor-like family member 3">
    <location>
        <begin position="25"/>
        <end position="125"/>
    </location>
</feature>
<feature type="sequence variant" id="VAR_034012" description="In dbSNP:rs10406448.">
    <original>T</original>
    <variation>S</variation>
    <location>
        <position position="66"/>
    </location>
</feature>
<organism>
    <name type="scientific">Homo sapiens</name>
    <name type="common">Human</name>
    <dbReference type="NCBI Taxonomy" id="9606"/>
    <lineage>
        <taxon>Eukaryota</taxon>
        <taxon>Metazoa</taxon>
        <taxon>Chordata</taxon>
        <taxon>Craniata</taxon>
        <taxon>Vertebrata</taxon>
        <taxon>Euteleostomi</taxon>
        <taxon>Mammalia</taxon>
        <taxon>Eutheria</taxon>
        <taxon>Euarchontoglires</taxon>
        <taxon>Primates</taxon>
        <taxon>Haplorrhini</taxon>
        <taxon>Catarrhini</taxon>
        <taxon>Hominidae</taxon>
        <taxon>Homo</taxon>
    </lineage>
</organism>
<name>IGFL3_HUMAN</name>
<reference key="1">
    <citation type="journal article" date="2006" name="Genomics">
        <title>IGFL: a secreted family with conserved cysteine residues and similarities to the IGF superfamily.</title>
        <authorList>
            <person name="Emtage P."/>
            <person name="Vatta P."/>
            <person name="Arterburn M."/>
            <person name="Muller M.W."/>
            <person name="Park E."/>
            <person name="Boyle B."/>
            <person name="Hazell S."/>
            <person name="Polizotto R."/>
            <person name="Funk W.D."/>
            <person name="Tang Y.T."/>
        </authorList>
    </citation>
    <scope>NUCLEOTIDE SEQUENCE [MRNA]</scope>
    <scope>TISSUE SPECIFICITY</scope>
</reference>
<reference key="2">
    <citation type="journal article" date="2003" name="Genome Res.">
        <title>The secreted protein discovery initiative (SPDI), a large-scale effort to identify novel human secreted and transmembrane proteins: a bioinformatics assessment.</title>
        <authorList>
            <person name="Clark H.F."/>
            <person name="Gurney A.L."/>
            <person name="Abaya E."/>
            <person name="Baker K."/>
            <person name="Baldwin D.T."/>
            <person name="Brush J."/>
            <person name="Chen J."/>
            <person name="Chow B."/>
            <person name="Chui C."/>
            <person name="Crowley C."/>
            <person name="Currell B."/>
            <person name="Deuel B."/>
            <person name="Dowd P."/>
            <person name="Eaton D."/>
            <person name="Foster J.S."/>
            <person name="Grimaldi C."/>
            <person name="Gu Q."/>
            <person name="Hass P.E."/>
            <person name="Heldens S."/>
            <person name="Huang A."/>
            <person name="Kim H.S."/>
            <person name="Klimowski L."/>
            <person name="Jin Y."/>
            <person name="Johnson S."/>
            <person name="Lee J."/>
            <person name="Lewis L."/>
            <person name="Liao D."/>
            <person name="Mark M.R."/>
            <person name="Robbie E."/>
            <person name="Sanchez C."/>
            <person name="Schoenfeld J."/>
            <person name="Seshagiri S."/>
            <person name="Simmons L."/>
            <person name="Singh J."/>
            <person name="Smith V."/>
            <person name="Stinson J."/>
            <person name="Vagts A."/>
            <person name="Vandlen R.L."/>
            <person name="Watanabe C."/>
            <person name="Wieand D."/>
            <person name="Woods K."/>
            <person name="Xie M.-H."/>
            <person name="Yansura D.G."/>
            <person name="Yi S."/>
            <person name="Yu G."/>
            <person name="Yuan J."/>
            <person name="Zhang M."/>
            <person name="Zhang Z."/>
            <person name="Goddard A.D."/>
            <person name="Wood W.I."/>
            <person name="Godowski P.J."/>
            <person name="Gray A.M."/>
        </authorList>
    </citation>
    <scope>NUCLEOTIDE SEQUENCE [LARGE SCALE MRNA]</scope>
</reference>
<reference key="3">
    <citation type="journal article" date="2004" name="Nature">
        <title>The DNA sequence and biology of human chromosome 19.</title>
        <authorList>
            <person name="Grimwood J."/>
            <person name="Gordon L.A."/>
            <person name="Olsen A.S."/>
            <person name="Terry A."/>
            <person name="Schmutz J."/>
            <person name="Lamerdin J.E."/>
            <person name="Hellsten U."/>
            <person name="Goodstein D."/>
            <person name="Couronne O."/>
            <person name="Tran-Gyamfi M."/>
            <person name="Aerts A."/>
            <person name="Altherr M."/>
            <person name="Ashworth L."/>
            <person name="Bajorek E."/>
            <person name="Black S."/>
            <person name="Branscomb E."/>
            <person name="Caenepeel S."/>
            <person name="Carrano A.V."/>
            <person name="Caoile C."/>
            <person name="Chan Y.M."/>
            <person name="Christensen M."/>
            <person name="Cleland C.A."/>
            <person name="Copeland A."/>
            <person name="Dalin E."/>
            <person name="Dehal P."/>
            <person name="Denys M."/>
            <person name="Detter J.C."/>
            <person name="Escobar J."/>
            <person name="Flowers D."/>
            <person name="Fotopulos D."/>
            <person name="Garcia C."/>
            <person name="Georgescu A.M."/>
            <person name="Glavina T."/>
            <person name="Gomez M."/>
            <person name="Gonzales E."/>
            <person name="Groza M."/>
            <person name="Hammon N."/>
            <person name="Hawkins T."/>
            <person name="Haydu L."/>
            <person name="Ho I."/>
            <person name="Huang W."/>
            <person name="Israni S."/>
            <person name="Jett J."/>
            <person name="Kadner K."/>
            <person name="Kimball H."/>
            <person name="Kobayashi A."/>
            <person name="Larionov V."/>
            <person name="Leem S.-H."/>
            <person name="Lopez F."/>
            <person name="Lou Y."/>
            <person name="Lowry S."/>
            <person name="Malfatti S."/>
            <person name="Martinez D."/>
            <person name="McCready P.M."/>
            <person name="Medina C."/>
            <person name="Morgan J."/>
            <person name="Nelson K."/>
            <person name="Nolan M."/>
            <person name="Ovcharenko I."/>
            <person name="Pitluck S."/>
            <person name="Pollard M."/>
            <person name="Popkie A.P."/>
            <person name="Predki P."/>
            <person name="Quan G."/>
            <person name="Ramirez L."/>
            <person name="Rash S."/>
            <person name="Retterer J."/>
            <person name="Rodriguez A."/>
            <person name="Rogers S."/>
            <person name="Salamov A."/>
            <person name="Salazar A."/>
            <person name="She X."/>
            <person name="Smith D."/>
            <person name="Slezak T."/>
            <person name="Solovyev V."/>
            <person name="Thayer N."/>
            <person name="Tice H."/>
            <person name="Tsai M."/>
            <person name="Ustaszewska A."/>
            <person name="Vo N."/>
            <person name="Wagner M."/>
            <person name="Wheeler J."/>
            <person name="Wu K."/>
            <person name="Xie G."/>
            <person name="Yang J."/>
            <person name="Dubchak I."/>
            <person name="Furey T.S."/>
            <person name="DeJong P."/>
            <person name="Dickson M."/>
            <person name="Gordon D."/>
            <person name="Eichler E.E."/>
            <person name="Pennacchio L.A."/>
            <person name="Richardson P."/>
            <person name="Stubbs L."/>
            <person name="Rokhsar D.S."/>
            <person name="Myers R.M."/>
            <person name="Rubin E.M."/>
            <person name="Lucas S.M."/>
        </authorList>
    </citation>
    <scope>NUCLEOTIDE SEQUENCE [LARGE SCALE GENOMIC DNA]</scope>
</reference>
<reference key="4">
    <citation type="journal article" date="2004" name="Protein Sci.">
        <title>Signal peptide prediction based on analysis of experimentally verified cleavage sites.</title>
        <authorList>
            <person name="Zhang Z."/>
            <person name="Henzel W.J."/>
        </authorList>
    </citation>
    <scope>PROTEIN SEQUENCE OF 25-39</scope>
</reference>
<reference key="5">
    <citation type="journal article" date="2011" name="J. Biol. Chem.">
        <title>Murine IGFL and human IGFL1 are induced in inflammatory skin conditions and bind to a novel TNF receptor family member, IGFLR1.</title>
        <authorList>
            <person name="Lobito A.A."/>
            <person name="Ramani S.R."/>
            <person name="Tom I."/>
            <person name="Bazan J.F."/>
            <person name="Luis E."/>
            <person name="Fairbrother W.J."/>
            <person name="Ouyang W."/>
            <person name="Gonzalez L.C."/>
        </authorList>
    </citation>
    <scope>FUNCTION</scope>
</reference>
<accession>Q6UXB1</accession>
<protein>
    <recommendedName>
        <fullName>Insulin growth factor-like family member 3</fullName>
    </recommendedName>
</protein>
<evidence type="ECO:0000269" key="1">
    <source>
    </source>
</evidence>
<evidence type="ECO:0000269" key="2">
    <source>
    </source>
</evidence>
<evidence type="ECO:0000269" key="3">
    <source>
    </source>
</evidence>
<evidence type="ECO:0000305" key="4"/>